<comment type="function">
    <text evidence="1">PPIases accelerate the folding of proteins. It catalyzes the cis-trans isomerization of proline imidic peptide bonds in oligopeptides. Acts as a regulatory subunit for PP2A-like phosphatases modulating their activity or substrate specificity, probably by inducing a conformational change in the catalytic subunit, a direct target of the PPIase. Can reactivate inactive phosphatase PP2A-phosphatase methylesterase complexes (PP2Ai) in presence of ATP and Mg(2+) by dissociating the inactive form from the complex (By similarity).</text>
</comment>
<comment type="catalytic activity">
    <reaction>
        <text>[protein]-peptidylproline (omega=180) = [protein]-peptidylproline (omega=0)</text>
        <dbReference type="Rhea" id="RHEA:16237"/>
        <dbReference type="Rhea" id="RHEA-COMP:10747"/>
        <dbReference type="Rhea" id="RHEA-COMP:10748"/>
        <dbReference type="ChEBI" id="CHEBI:83833"/>
        <dbReference type="ChEBI" id="CHEBI:83834"/>
        <dbReference type="EC" id="5.2.1.8"/>
    </reaction>
</comment>
<comment type="subcellular location">
    <subcellularLocation>
        <location evidence="1">Cytoplasm</location>
    </subcellularLocation>
    <subcellularLocation>
        <location evidence="1">Nucleus</location>
    </subcellularLocation>
</comment>
<comment type="similarity">
    <text evidence="3">Belongs to the PTPA-type PPIase family.</text>
</comment>
<evidence type="ECO:0000250" key="1"/>
<evidence type="ECO:0000256" key="2">
    <source>
        <dbReference type="SAM" id="MobiDB-lite"/>
    </source>
</evidence>
<evidence type="ECO:0000305" key="3"/>
<reference key="1">
    <citation type="journal article" date="2004" name="Nature">
        <title>Genome evolution in yeasts.</title>
        <authorList>
            <person name="Dujon B."/>
            <person name="Sherman D."/>
            <person name="Fischer G."/>
            <person name="Durrens P."/>
            <person name="Casaregola S."/>
            <person name="Lafontaine I."/>
            <person name="de Montigny J."/>
            <person name="Marck C."/>
            <person name="Neuveglise C."/>
            <person name="Talla E."/>
            <person name="Goffard N."/>
            <person name="Frangeul L."/>
            <person name="Aigle M."/>
            <person name="Anthouard V."/>
            <person name="Babour A."/>
            <person name="Barbe V."/>
            <person name="Barnay S."/>
            <person name="Blanchin S."/>
            <person name="Beckerich J.-M."/>
            <person name="Beyne E."/>
            <person name="Bleykasten C."/>
            <person name="Boisrame A."/>
            <person name="Boyer J."/>
            <person name="Cattolico L."/>
            <person name="Confanioleri F."/>
            <person name="de Daruvar A."/>
            <person name="Despons L."/>
            <person name="Fabre E."/>
            <person name="Fairhead C."/>
            <person name="Ferry-Dumazet H."/>
            <person name="Groppi A."/>
            <person name="Hantraye F."/>
            <person name="Hennequin C."/>
            <person name="Jauniaux N."/>
            <person name="Joyet P."/>
            <person name="Kachouri R."/>
            <person name="Kerrest A."/>
            <person name="Koszul R."/>
            <person name="Lemaire M."/>
            <person name="Lesur I."/>
            <person name="Ma L."/>
            <person name="Muller H."/>
            <person name="Nicaud J.-M."/>
            <person name="Nikolski M."/>
            <person name="Oztas S."/>
            <person name="Ozier-Kalogeropoulos O."/>
            <person name="Pellenz S."/>
            <person name="Potier S."/>
            <person name="Richard G.-F."/>
            <person name="Straub M.-L."/>
            <person name="Suleau A."/>
            <person name="Swennen D."/>
            <person name="Tekaia F."/>
            <person name="Wesolowski-Louvel M."/>
            <person name="Westhof E."/>
            <person name="Wirth B."/>
            <person name="Zeniou-Meyer M."/>
            <person name="Zivanovic Y."/>
            <person name="Bolotin-Fukuhara M."/>
            <person name="Thierry A."/>
            <person name="Bouchier C."/>
            <person name="Caudron B."/>
            <person name="Scarpelli C."/>
            <person name="Gaillardin C."/>
            <person name="Weissenbach J."/>
            <person name="Wincker P."/>
            <person name="Souciet J.-L."/>
        </authorList>
    </citation>
    <scope>NUCLEOTIDE SEQUENCE [LARGE SCALE GENOMIC DNA]</scope>
    <source>
        <strain>CLIB 122 / E 150</strain>
    </source>
</reference>
<keyword id="KW-0963">Cytoplasm</keyword>
<keyword id="KW-0413">Isomerase</keyword>
<keyword id="KW-0539">Nucleus</keyword>
<keyword id="KW-1185">Reference proteome</keyword>
<keyword id="KW-0697">Rotamase</keyword>
<name>PTPA1_YARLI</name>
<dbReference type="EC" id="5.2.1.8"/>
<dbReference type="EMBL" id="CR382128">
    <property type="protein sequence ID" value="CAG82655.1"/>
    <property type="molecule type" value="Genomic_DNA"/>
</dbReference>
<dbReference type="RefSeq" id="XP_500437.1">
    <property type="nucleotide sequence ID" value="XM_500437.1"/>
</dbReference>
<dbReference type="SMR" id="Q6CFX5"/>
<dbReference type="FunCoup" id="Q6CFX5">
    <property type="interactions" value="89"/>
</dbReference>
<dbReference type="STRING" id="284591.Q6CFX5"/>
<dbReference type="EnsemblFungi" id="CAG82655">
    <property type="protein sequence ID" value="CAG82655"/>
    <property type="gene ID" value="YALI0_B02772g"/>
</dbReference>
<dbReference type="KEGG" id="yli:2907316"/>
<dbReference type="VEuPathDB" id="FungiDB:YALI0_B02772g"/>
<dbReference type="HOGENOM" id="CLU_030733_2_1_1"/>
<dbReference type="InParanoid" id="Q6CFX5"/>
<dbReference type="OMA" id="TCTSWID"/>
<dbReference type="OrthoDB" id="123516at4891"/>
<dbReference type="Proteomes" id="UP000001300">
    <property type="component" value="Chromosome B"/>
</dbReference>
<dbReference type="GO" id="GO:0000785">
    <property type="term" value="C:chromatin"/>
    <property type="evidence" value="ECO:0007669"/>
    <property type="project" value="EnsemblFungi"/>
</dbReference>
<dbReference type="GO" id="GO:0005737">
    <property type="term" value="C:cytoplasm"/>
    <property type="evidence" value="ECO:0000318"/>
    <property type="project" value="GO_Central"/>
</dbReference>
<dbReference type="GO" id="GO:0005634">
    <property type="term" value="C:nucleus"/>
    <property type="evidence" value="ECO:0000318"/>
    <property type="project" value="GO_Central"/>
</dbReference>
<dbReference type="GO" id="GO:0000159">
    <property type="term" value="C:protein phosphatase type 2A complex"/>
    <property type="evidence" value="ECO:0000318"/>
    <property type="project" value="GO_Central"/>
</dbReference>
<dbReference type="GO" id="GO:0003755">
    <property type="term" value="F:peptidyl-prolyl cis-trans isomerase activity"/>
    <property type="evidence" value="ECO:0000318"/>
    <property type="project" value="GO_Central"/>
</dbReference>
<dbReference type="GO" id="GO:0008160">
    <property type="term" value="F:protein tyrosine phosphatase activator activity"/>
    <property type="evidence" value="ECO:0000318"/>
    <property type="project" value="GO_Central"/>
</dbReference>
<dbReference type="GO" id="GO:0006914">
    <property type="term" value="P:autophagy"/>
    <property type="evidence" value="ECO:0007669"/>
    <property type="project" value="EnsemblFungi"/>
</dbReference>
<dbReference type="GO" id="GO:0006281">
    <property type="term" value="P:DNA repair"/>
    <property type="evidence" value="ECO:0007669"/>
    <property type="project" value="EnsemblFungi"/>
</dbReference>
<dbReference type="GO" id="GO:0000082">
    <property type="term" value="P:G1/S transition of mitotic cell cycle"/>
    <property type="evidence" value="ECO:0007669"/>
    <property type="project" value="EnsemblFungi"/>
</dbReference>
<dbReference type="GO" id="GO:0007052">
    <property type="term" value="P:mitotic spindle organization"/>
    <property type="evidence" value="ECO:0000318"/>
    <property type="project" value="GO_Central"/>
</dbReference>
<dbReference type="GO" id="GO:0006357">
    <property type="term" value="P:regulation of transcription by RNA polymerase II"/>
    <property type="evidence" value="ECO:0007669"/>
    <property type="project" value="EnsemblFungi"/>
</dbReference>
<dbReference type="CDD" id="cd04087">
    <property type="entry name" value="PTPA"/>
    <property type="match status" value="1"/>
</dbReference>
<dbReference type="FunFam" id="1.20.120.1150:FF:000003">
    <property type="entry name" value="Serine/threonine-protein phosphatase 2A activator"/>
    <property type="match status" value="1"/>
</dbReference>
<dbReference type="Gene3D" id="1.20.120.1150">
    <property type="match status" value="1"/>
</dbReference>
<dbReference type="InterPro" id="IPR004327">
    <property type="entry name" value="Phstyr_phstse_ac"/>
</dbReference>
<dbReference type="InterPro" id="IPR043170">
    <property type="entry name" value="PTPA_C_lid"/>
</dbReference>
<dbReference type="InterPro" id="IPR037218">
    <property type="entry name" value="PTPA_sf"/>
</dbReference>
<dbReference type="PANTHER" id="PTHR10012">
    <property type="entry name" value="SERINE/THREONINE-PROTEIN PHOSPHATASE 2A REGULATORY SUBUNIT B"/>
    <property type="match status" value="1"/>
</dbReference>
<dbReference type="PANTHER" id="PTHR10012:SF3">
    <property type="entry name" value="SERINE_THREONINE-PROTEIN PHOSPHATASE 2A ACTIVATOR 1"/>
    <property type="match status" value="1"/>
</dbReference>
<dbReference type="Pfam" id="PF03095">
    <property type="entry name" value="PTPA"/>
    <property type="match status" value="1"/>
</dbReference>
<dbReference type="PIRSF" id="PIRSF016325">
    <property type="entry name" value="Phstyr_phstse_ac"/>
    <property type="match status" value="1"/>
</dbReference>
<dbReference type="SUPFAM" id="SSF140984">
    <property type="entry name" value="PTPA-like"/>
    <property type="match status" value="1"/>
</dbReference>
<proteinExistence type="inferred from homology"/>
<organism>
    <name type="scientific">Yarrowia lipolytica (strain CLIB 122 / E 150)</name>
    <name type="common">Yeast</name>
    <name type="synonym">Candida lipolytica</name>
    <dbReference type="NCBI Taxonomy" id="284591"/>
    <lineage>
        <taxon>Eukaryota</taxon>
        <taxon>Fungi</taxon>
        <taxon>Dikarya</taxon>
        <taxon>Ascomycota</taxon>
        <taxon>Saccharomycotina</taxon>
        <taxon>Dipodascomycetes</taxon>
        <taxon>Dipodascales</taxon>
        <taxon>Dipodascales incertae sedis</taxon>
        <taxon>Yarrowia</taxon>
    </lineage>
</organism>
<feature type="chain" id="PRO_0000226105" description="Serine/threonine-protein phosphatase 2A activator 1">
    <location>
        <begin position="1"/>
        <end position="432"/>
    </location>
</feature>
<feature type="region of interest" description="Disordered" evidence="2">
    <location>
        <begin position="322"/>
        <end position="432"/>
    </location>
</feature>
<feature type="compositionally biased region" description="Basic and acidic residues" evidence="2">
    <location>
        <begin position="366"/>
        <end position="389"/>
    </location>
</feature>
<feature type="compositionally biased region" description="Low complexity" evidence="2">
    <location>
        <begin position="396"/>
        <end position="412"/>
    </location>
</feature>
<protein>
    <recommendedName>
        <fullName>Serine/threonine-protein phosphatase 2A activator 1</fullName>
        <ecNumber>5.2.1.8</ecNumber>
    </recommendedName>
    <alternativeName>
        <fullName>Peptidyl-prolyl cis-trans isomerase PTPA-1</fullName>
        <shortName>PPIase PTPA-1</shortName>
        <shortName>Rotamase PTPA-1</shortName>
    </alternativeName>
    <alternativeName>
        <fullName>Phosphotyrosyl phosphatase activator 1</fullName>
    </alternativeName>
</protein>
<accession>Q6CFX5</accession>
<gene>
    <name type="primary">RRD1</name>
    <name type="ordered locus">YALI0B02772g</name>
</gene>
<sequence>MTFSEPQKRISSAADVDSFKRSQPYATIISLLDKYSSTVQEHLLPPNEDELAASSKALVTLCRKLSALIDETPPLEGPRRFGNVAVRDWHDKMEAQTTALLTEAFPSINKDSIIELQYYLHGGMGSKQRLDFGTGHELSFMAFVGGLQKLGLLETDLPAPDVLFIFETYFVLVRKLIMTYSLEPAGSHGVWGLDDHSHLPYILGSAQKVSRSVTASTLLVPTKYDKECPPSSVMNPRIVQQQKTTNLYFAAIAFIYDIKSGPFYEHSPILYDISGIATWAKIHSGMIKMYIAEVLGKFPVVQHFYFGSELYPWKDTEGNDLPYSKVEDEEPVKPKLPLGFKSKKEPQTTPHARLPLMGPRGMPMETVERLARRDGQRAAREKEEREDRASGGASGTTGAPGATALPPTRAPGSSVPGGDAPGMAPTKAPWAK</sequence>